<keyword id="KW-0256">Endoplasmic reticulum</keyword>
<keyword id="KW-0472">Membrane</keyword>
<keyword id="KW-1185">Reference proteome</keyword>
<keyword id="KW-0812">Transmembrane</keyword>
<keyword id="KW-1133">Transmembrane helix</keyword>
<reference key="1">
    <citation type="journal article" date="2002" name="Nature">
        <title>The genome sequence of Schizosaccharomyces pombe.</title>
        <authorList>
            <person name="Wood V."/>
            <person name="Gwilliam R."/>
            <person name="Rajandream M.A."/>
            <person name="Lyne M.H."/>
            <person name="Lyne R."/>
            <person name="Stewart A."/>
            <person name="Sgouros J.G."/>
            <person name="Peat N."/>
            <person name="Hayles J."/>
            <person name="Baker S.G."/>
            <person name="Basham D."/>
            <person name="Bowman S."/>
            <person name="Brooks K."/>
            <person name="Brown D."/>
            <person name="Brown S."/>
            <person name="Chillingworth T."/>
            <person name="Churcher C.M."/>
            <person name="Collins M."/>
            <person name="Connor R."/>
            <person name="Cronin A."/>
            <person name="Davis P."/>
            <person name="Feltwell T."/>
            <person name="Fraser A."/>
            <person name="Gentles S."/>
            <person name="Goble A."/>
            <person name="Hamlin N."/>
            <person name="Harris D.E."/>
            <person name="Hidalgo J."/>
            <person name="Hodgson G."/>
            <person name="Holroyd S."/>
            <person name="Hornsby T."/>
            <person name="Howarth S."/>
            <person name="Huckle E.J."/>
            <person name="Hunt S."/>
            <person name="Jagels K."/>
            <person name="James K.D."/>
            <person name="Jones L."/>
            <person name="Jones M."/>
            <person name="Leather S."/>
            <person name="McDonald S."/>
            <person name="McLean J."/>
            <person name="Mooney P."/>
            <person name="Moule S."/>
            <person name="Mungall K.L."/>
            <person name="Murphy L.D."/>
            <person name="Niblett D."/>
            <person name="Odell C."/>
            <person name="Oliver K."/>
            <person name="O'Neil S."/>
            <person name="Pearson D."/>
            <person name="Quail M.A."/>
            <person name="Rabbinowitsch E."/>
            <person name="Rutherford K.M."/>
            <person name="Rutter S."/>
            <person name="Saunders D."/>
            <person name="Seeger K."/>
            <person name="Sharp S."/>
            <person name="Skelton J."/>
            <person name="Simmonds M.N."/>
            <person name="Squares R."/>
            <person name="Squares S."/>
            <person name="Stevens K."/>
            <person name="Taylor K."/>
            <person name="Taylor R.G."/>
            <person name="Tivey A."/>
            <person name="Walsh S.V."/>
            <person name="Warren T."/>
            <person name="Whitehead S."/>
            <person name="Woodward J.R."/>
            <person name="Volckaert G."/>
            <person name="Aert R."/>
            <person name="Robben J."/>
            <person name="Grymonprez B."/>
            <person name="Weltjens I."/>
            <person name="Vanstreels E."/>
            <person name="Rieger M."/>
            <person name="Schaefer M."/>
            <person name="Mueller-Auer S."/>
            <person name="Gabel C."/>
            <person name="Fuchs M."/>
            <person name="Duesterhoeft A."/>
            <person name="Fritzc C."/>
            <person name="Holzer E."/>
            <person name="Moestl D."/>
            <person name="Hilbert H."/>
            <person name="Borzym K."/>
            <person name="Langer I."/>
            <person name="Beck A."/>
            <person name="Lehrach H."/>
            <person name="Reinhardt R."/>
            <person name="Pohl T.M."/>
            <person name="Eger P."/>
            <person name="Zimmermann W."/>
            <person name="Wedler H."/>
            <person name="Wambutt R."/>
            <person name="Purnelle B."/>
            <person name="Goffeau A."/>
            <person name="Cadieu E."/>
            <person name="Dreano S."/>
            <person name="Gloux S."/>
            <person name="Lelaure V."/>
            <person name="Mottier S."/>
            <person name="Galibert F."/>
            <person name="Aves S.J."/>
            <person name="Xiang Z."/>
            <person name="Hunt C."/>
            <person name="Moore K."/>
            <person name="Hurst S.M."/>
            <person name="Lucas M."/>
            <person name="Rochet M."/>
            <person name="Gaillardin C."/>
            <person name="Tallada V.A."/>
            <person name="Garzon A."/>
            <person name="Thode G."/>
            <person name="Daga R.R."/>
            <person name="Cruzado L."/>
            <person name="Jimenez J."/>
            <person name="Sanchez M."/>
            <person name="del Rey F."/>
            <person name="Benito J."/>
            <person name="Dominguez A."/>
            <person name="Revuelta J.L."/>
            <person name="Moreno S."/>
            <person name="Armstrong J."/>
            <person name="Forsburg S.L."/>
            <person name="Cerutti L."/>
            <person name="Lowe T."/>
            <person name="McCombie W.R."/>
            <person name="Paulsen I."/>
            <person name="Potashkin J."/>
            <person name="Shpakovski G.V."/>
            <person name="Ussery D."/>
            <person name="Barrell B.G."/>
            <person name="Nurse P."/>
        </authorList>
    </citation>
    <scope>NUCLEOTIDE SEQUENCE [LARGE SCALE GENOMIC DNA]</scope>
    <source>
        <strain>972 / ATCC 24843</strain>
    </source>
</reference>
<reference key="2">
    <citation type="journal article" date="2006" name="Nat. Biotechnol.">
        <title>ORFeome cloning and global analysis of protein localization in the fission yeast Schizosaccharomyces pombe.</title>
        <authorList>
            <person name="Matsuyama A."/>
            <person name="Arai R."/>
            <person name="Yashiroda Y."/>
            <person name="Shirai A."/>
            <person name="Kamata A."/>
            <person name="Sekido S."/>
            <person name="Kobayashi Y."/>
            <person name="Hashimoto A."/>
            <person name="Hamamoto M."/>
            <person name="Hiraoka Y."/>
            <person name="Horinouchi S."/>
            <person name="Yoshida M."/>
        </authorList>
    </citation>
    <scope>SUBCELLULAR LOCATION [LARGE SCALE ANALYSIS]</scope>
</reference>
<name>YLN8_SCHPO</name>
<accession>Q9C0X7</accession>
<organism>
    <name type="scientific">Schizosaccharomyces pombe (strain 972 / ATCC 24843)</name>
    <name type="common">Fission yeast</name>
    <dbReference type="NCBI Taxonomy" id="284812"/>
    <lineage>
        <taxon>Eukaryota</taxon>
        <taxon>Fungi</taxon>
        <taxon>Dikarya</taxon>
        <taxon>Ascomycota</taxon>
        <taxon>Taphrinomycotina</taxon>
        <taxon>Schizosaccharomycetes</taxon>
        <taxon>Schizosaccharomycetales</taxon>
        <taxon>Schizosaccharomycetaceae</taxon>
        <taxon>Schizosaccharomyces</taxon>
    </lineage>
</organism>
<dbReference type="EMBL" id="CU329670">
    <property type="protein sequence ID" value="CAC37427.1"/>
    <property type="molecule type" value="Genomic_DNA"/>
</dbReference>
<dbReference type="RefSeq" id="NP_594782.1">
    <property type="nucleotide sequence ID" value="NM_001020210.2"/>
</dbReference>
<dbReference type="BioGRID" id="279659">
    <property type="interactions" value="5"/>
</dbReference>
<dbReference type="PaxDb" id="4896-SPAPB8E5.08.1"/>
<dbReference type="EnsemblFungi" id="SPAPB8E5.08.1">
    <property type="protein sequence ID" value="SPAPB8E5.08.1:pep"/>
    <property type="gene ID" value="SPAPB8E5.08"/>
</dbReference>
<dbReference type="KEGG" id="spo:2543231"/>
<dbReference type="PomBase" id="SPAPB8E5.08"/>
<dbReference type="VEuPathDB" id="FungiDB:SPAPB8E5.08"/>
<dbReference type="HOGENOM" id="CLU_2265287_0_0_1"/>
<dbReference type="InParanoid" id="Q9C0X7"/>
<dbReference type="PRO" id="PR:Q9C0X7"/>
<dbReference type="Proteomes" id="UP000002485">
    <property type="component" value="Chromosome I"/>
</dbReference>
<dbReference type="GO" id="GO:0005783">
    <property type="term" value="C:endoplasmic reticulum"/>
    <property type="evidence" value="ECO:0007005"/>
    <property type="project" value="PomBase"/>
</dbReference>
<dbReference type="GO" id="GO:0005789">
    <property type="term" value="C:endoplasmic reticulum membrane"/>
    <property type="evidence" value="ECO:0007669"/>
    <property type="project" value="UniProtKB-SubCell"/>
</dbReference>
<evidence type="ECO:0000255" key="1"/>
<evidence type="ECO:0000269" key="2">
    <source>
    </source>
</evidence>
<proteinExistence type="predicted"/>
<sequence length="103" mass="12661">MRKLRCKQMIPKLLPFIFIYLSVANKIMFYCILNERAFKHYKTYRRITDCPEIKNKKSRRKNQRNSSSIGLSNPNKFSIYIYIYFFFYSFLCSPYLFKYISLF</sequence>
<comment type="subcellular location">
    <subcellularLocation>
        <location evidence="2">Endoplasmic reticulum membrane</location>
        <topology evidence="2">Multi-pass membrane protein</topology>
    </subcellularLocation>
</comment>
<gene>
    <name type="ORF">SPAPB8E5.08</name>
</gene>
<feature type="chain" id="PRO_0000304123" description="Uncharacterized membrane protein PB8E5.08">
    <location>
        <begin position="1"/>
        <end position="103"/>
    </location>
</feature>
<feature type="transmembrane region" description="Helical" evidence="1">
    <location>
        <begin position="13"/>
        <end position="33"/>
    </location>
</feature>
<feature type="transmembrane region" description="Helical" evidence="1">
    <location>
        <begin position="77"/>
        <end position="97"/>
    </location>
</feature>
<protein>
    <recommendedName>
        <fullName>Uncharacterized membrane protein PB8E5.08</fullName>
    </recommendedName>
</protein>